<accession>Q6P656</accession>
<accession>Q8N906</accession>
<feature type="chain" id="PRO_0000244092" description="Cilia- and flagella-associated protein 161">
    <location>
        <begin position="1"/>
        <end position="301"/>
    </location>
</feature>
<feature type="region of interest" description="Disordered" evidence="2">
    <location>
        <begin position="269"/>
        <end position="301"/>
    </location>
</feature>
<feature type="splice variant" id="VSP_019511" description="In isoform 2." evidence="4">
    <location>
        <begin position="1"/>
        <end position="25"/>
    </location>
</feature>
<feature type="splice variant" id="VSP_019512" description="In isoform 2." evidence="4">
    <original>QAAFPDPQLRLEYEGFPVPANAKILINHCHT</original>
    <variation>NMKASPSRQMLKFSSITVTQIGDWQPTGIFS</variation>
    <location>
        <begin position="194"/>
        <end position="224"/>
    </location>
</feature>
<feature type="splice variant" id="VSP_019513" description="In isoform 2." evidence="4">
    <location>
        <begin position="225"/>
        <end position="301"/>
    </location>
</feature>
<feature type="sequence variant" id="VAR_050883" description="In dbSNP:rs2279997.">
    <original>P</original>
    <variation>S</variation>
    <location>
        <position position="284"/>
    </location>
</feature>
<evidence type="ECO:0000250" key="1">
    <source>
        <dbReference type="UniProtKB" id="Q6P8Y0"/>
    </source>
</evidence>
<evidence type="ECO:0000256" key="2">
    <source>
        <dbReference type="SAM" id="MobiDB-lite"/>
    </source>
</evidence>
<evidence type="ECO:0000269" key="3">
    <source>
    </source>
</evidence>
<evidence type="ECO:0000303" key="4">
    <source>
    </source>
</evidence>
<evidence type="ECO:0000312" key="5">
    <source>
        <dbReference type="HGNC" id="HGNC:26782"/>
    </source>
</evidence>
<evidence type="ECO:0007744" key="6">
    <source>
        <dbReference type="PDB" id="7UNG"/>
    </source>
</evidence>
<organism>
    <name type="scientific">Homo sapiens</name>
    <name type="common">Human</name>
    <dbReference type="NCBI Taxonomy" id="9606"/>
    <lineage>
        <taxon>Eukaryota</taxon>
        <taxon>Metazoa</taxon>
        <taxon>Chordata</taxon>
        <taxon>Craniata</taxon>
        <taxon>Vertebrata</taxon>
        <taxon>Euteleostomi</taxon>
        <taxon>Mammalia</taxon>
        <taxon>Eutheria</taxon>
        <taxon>Euarchontoglires</taxon>
        <taxon>Primates</taxon>
        <taxon>Haplorrhini</taxon>
        <taxon>Catarrhini</taxon>
        <taxon>Hominidae</taxon>
        <taxon>Homo</taxon>
    </lineage>
</organism>
<protein>
    <recommendedName>
        <fullName evidence="5">Cilia- and flagella-associated protein 161</fullName>
    </recommendedName>
</protein>
<keyword id="KW-0002">3D-structure</keyword>
<keyword id="KW-0025">Alternative splicing</keyword>
<keyword id="KW-0966">Cell projection</keyword>
<keyword id="KW-0969">Cilium</keyword>
<keyword id="KW-0963">Cytoplasm</keyword>
<keyword id="KW-0206">Cytoskeleton</keyword>
<keyword id="KW-0282">Flagellum</keyword>
<keyword id="KW-1267">Proteomics identification</keyword>
<keyword id="KW-1185">Reference proteome</keyword>
<gene>
    <name evidence="5" type="primary">CFAP161</name>
    <name evidence="5" type="synonym">C15orf26</name>
</gene>
<proteinExistence type="evidence at protein level"/>
<name>CF161_HUMAN</name>
<comment type="function">
    <text evidence="3">Microtubule inner protein (MIP) part of the dynein-decorated doublet microtubules (DMTs) in cilia axoneme, which is required for motile cilia beating.</text>
</comment>
<comment type="subunit">
    <text evidence="1">Microtubule inner protein component of sperm flagellar doublet microtubules.</text>
</comment>
<comment type="interaction">
    <interactant intactId="EBI-11901329">
        <id>Q6P656</id>
    </interactant>
    <interactant intactId="EBI-765407">
        <id>P41182</id>
        <label>BCL6</label>
    </interactant>
    <organismsDiffer>false</organismsDiffer>
    <experiments>3</experiments>
</comment>
<comment type="interaction">
    <interactant intactId="EBI-11901329">
        <id>Q6P656</id>
    </interactant>
    <interactant intactId="EBI-739784">
        <id>Q9BW66</id>
        <label>CINP</label>
    </interactant>
    <organismsDiffer>false</organismsDiffer>
    <experiments>3</experiments>
</comment>
<comment type="interaction">
    <interactant intactId="EBI-11901329">
        <id>Q6P656</id>
    </interactant>
    <interactant intactId="EBI-724653">
        <id>Q9BPU6</id>
        <label>DPYSL5</label>
    </interactant>
    <organismsDiffer>false</organismsDiffer>
    <experiments>3</experiments>
</comment>
<comment type="interaction">
    <interactant intactId="EBI-11901329">
        <id>Q6P656</id>
    </interactant>
    <interactant intactId="EBI-743105">
        <id>Q5JVL4</id>
        <label>EFHC1</label>
    </interactant>
    <organismsDiffer>false</organismsDiffer>
    <experiments>5</experiments>
</comment>
<comment type="subcellular location">
    <subcellularLocation>
        <location evidence="3">Cytoplasm</location>
        <location evidence="3">Cytoskeleton</location>
        <location evidence="3">Cilium axoneme</location>
    </subcellularLocation>
    <subcellularLocation>
        <location evidence="1">Cytoplasm</location>
        <location evidence="1">Cytoskeleton</location>
        <location evidence="1">Flagellum axoneme</location>
    </subcellularLocation>
</comment>
<comment type="alternative products">
    <event type="alternative splicing"/>
    <isoform>
        <id>Q6P656-1</id>
        <name>1</name>
        <sequence type="displayed"/>
    </isoform>
    <isoform>
        <id>Q6P656-2</id>
        <name>2</name>
        <sequence type="described" ref="VSP_019511 VSP_019512 VSP_019513"/>
    </isoform>
</comment>
<comment type="tissue specificity">
    <text evidence="3">Expressed in airway epithelial cells.</text>
</comment>
<dbReference type="EMBL" id="AK095934">
    <property type="protein sequence ID" value="BAC04653.1"/>
    <property type="molecule type" value="mRNA"/>
</dbReference>
<dbReference type="EMBL" id="BC062471">
    <property type="protein sequence ID" value="AAH62471.1"/>
    <property type="molecule type" value="mRNA"/>
</dbReference>
<dbReference type="CCDS" id="CCDS42068.1">
    <molecule id="Q6P656-1"/>
</dbReference>
<dbReference type="RefSeq" id="NP_775799.2">
    <molecule id="Q6P656-1"/>
    <property type="nucleotide sequence ID" value="NM_173528.4"/>
</dbReference>
<dbReference type="PDB" id="7UNG">
    <property type="method" value="EM"/>
    <property type="resolution" value="3.60 A"/>
    <property type="chains" value="E/F=1-301"/>
</dbReference>
<dbReference type="PDB" id="8J07">
    <property type="method" value="EM"/>
    <property type="resolution" value="4.10 A"/>
    <property type="chains" value="2L/2M/2N/2O=1-301"/>
</dbReference>
<dbReference type="PDBsum" id="7UNG"/>
<dbReference type="PDBsum" id="8J07"/>
<dbReference type="EMDB" id="EMD-26624"/>
<dbReference type="EMDB" id="EMD-35888"/>
<dbReference type="SMR" id="Q6P656"/>
<dbReference type="BioGRID" id="127794">
    <property type="interactions" value="16"/>
</dbReference>
<dbReference type="FunCoup" id="Q6P656">
    <property type="interactions" value="93"/>
</dbReference>
<dbReference type="IntAct" id="Q6P656">
    <property type="interactions" value="7"/>
</dbReference>
<dbReference type="STRING" id="9606.ENSP00000286732"/>
<dbReference type="iPTMnet" id="Q6P656"/>
<dbReference type="PhosphoSitePlus" id="Q6P656"/>
<dbReference type="BioMuta" id="CFAP161"/>
<dbReference type="DMDM" id="74737454"/>
<dbReference type="jPOST" id="Q6P656"/>
<dbReference type="MassIVE" id="Q6P656"/>
<dbReference type="PaxDb" id="9606-ENSP00000286732"/>
<dbReference type="PeptideAtlas" id="Q6P656"/>
<dbReference type="ProteomicsDB" id="67015">
    <molecule id="Q6P656-1"/>
</dbReference>
<dbReference type="ProteomicsDB" id="67016">
    <molecule id="Q6P656-2"/>
</dbReference>
<dbReference type="Antibodypedia" id="27916">
    <property type="antibodies" value="42 antibodies from 15 providers"/>
</dbReference>
<dbReference type="DNASU" id="161502"/>
<dbReference type="Ensembl" id="ENST00000286732.5">
    <molecule id="Q6P656-1"/>
    <property type="protein sequence ID" value="ENSP00000286732.4"/>
    <property type="gene ID" value="ENSG00000156206.14"/>
</dbReference>
<dbReference type="GeneID" id="161502"/>
<dbReference type="KEGG" id="hsa:161502"/>
<dbReference type="MANE-Select" id="ENST00000286732.5">
    <property type="protein sequence ID" value="ENSP00000286732.4"/>
    <property type="RefSeq nucleotide sequence ID" value="NM_173528.4"/>
    <property type="RefSeq protein sequence ID" value="NP_775799.2"/>
</dbReference>
<dbReference type="UCSC" id="uc002bgb.4">
    <molecule id="Q6P656-1"/>
    <property type="organism name" value="human"/>
</dbReference>
<dbReference type="AGR" id="HGNC:26782"/>
<dbReference type="CTD" id="161502"/>
<dbReference type="DisGeNET" id="161502"/>
<dbReference type="GeneCards" id="CFAP161"/>
<dbReference type="HGNC" id="HGNC:26782">
    <property type="gene designation" value="CFAP161"/>
</dbReference>
<dbReference type="HPA" id="ENSG00000156206">
    <property type="expression patterns" value="Group enriched (choroid plexus, fallopian tube, testis)"/>
</dbReference>
<dbReference type="neXtProt" id="NX_Q6P656"/>
<dbReference type="OpenTargets" id="ENSG00000156206"/>
<dbReference type="PharmGKB" id="PA134908662"/>
<dbReference type="VEuPathDB" id="HostDB:ENSG00000156206"/>
<dbReference type="eggNOG" id="ENOG502QRDA">
    <property type="taxonomic scope" value="Eukaryota"/>
</dbReference>
<dbReference type="GeneTree" id="ENSGT00390000018488"/>
<dbReference type="HOGENOM" id="CLU_080458_0_0_1"/>
<dbReference type="InParanoid" id="Q6P656"/>
<dbReference type="OMA" id="IIHCKTN"/>
<dbReference type="OrthoDB" id="2126411at2759"/>
<dbReference type="PAN-GO" id="Q6P656">
    <property type="GO annotations" value="2 GO annotations based on evolutionary models"/>
</dbReference>
<dbReference type="PhylomeDB" id="Q6P656"/>
<dbReference type="PathwayCommons" id="Q6P656"/>
<dbReference type="SignaLink" id="Q6P656"/>
<dbReference type="BioGRID-ORCS" id="161502">
    <property type="hits" value="10 hits in 1106 CRISPR screens"/>
</dbReference>
<dbReference type="ChiTaRS" id="CFAP161">
    <property type="organism name" value="human"/>
</dbReference>
<dbReference type="GenomeRNAi" id="161502"/>
<dbReference type="Pharos" id="Q6P656">
    <property type="development level" value="Tdark"/>
</dbReference>
<dbReference type="PRO" id="PR:Q6P656"/>
<dbReference type="Proteomes" id="UP000005640">
    <property type="component" value="Chromosome 15"/>
</dbReference>
<dbReference type="RNAct" id="Q6P656">
    <property type="molecule type" value="protein"/>
</dbReference>
<dbReference type="Bgee" id="ENSG00000156206">
    <property type="expression patterns" value="Expressed in right uterine tube and 104 other cell types or tissues"/>
</dbReference>
<dbReference type="ExpressionAtlas" id="Q6P656">
    <property type="expression patterns" value="baseline and differential"/>
</dbReference>
<dbReference type="GO" id="GO:0160111">
    <property type="term" value="C:axonemal A tubule inner sheath"/>
    <property type="evidence" value="ECO:0000250"/>
    <property type="project" value="UniProtKB"/>
</dbReference>
<dbReference type="GO" id="GO:0005879">
    <property type="term" value="C:axonemal microtubule"/>
    <property type="evidence" value="ECO:0000314"/>
    <property type="project" value="UniProtKB"/>
</dbReference>
<dbReference type="GO" id="GO:0031514">
    <property type="term" value="C:motile cilium"/>
    <property type="evidence" value="ECO:0000318"/>
    <property type="project" value="GO_Central"/>
</dbReference>
<dbReference type="GO" id="GO:0036126">
    <property type="term" value="C:sperm flagellum"/>
    <property type="evidence" value="ECO:0000250"/>
    <property type="project" value="UniProtKB"/>
</dbReference>
<dbReference type="GO" id="GO:0060271">
    <property type="term" value="P:cilium assembly"/>
    <property type="evidence" value="ECO:0000318"/>
    <property type="project" value="GO_Central"/>
</dbReference>
<dbReference type="GO" id="GO:0030317">
    <property type="term" value="P:flagellated sperm motility"/>
    <property type="evidence" value="ECO:0000250"/>
    <property type="project" value="UniProtKB"/>
</dbReference>
<dbReference type="InterPro" id="IPR055325">
    <property type="entry name" value="CF161"/>
</dbReference>
<dbReference type="PANTHER" id="PTHR24274">
    <property type="entry name" value="CILIA- AND FLAGELLA-ASSOCIATED PROTEIN 161"/>
    <property type="match status" value="1"/>
</dbReference>
<dbReference type="PANTHER" id="PTHR24274:SF1">
    <property type="entry name" value="CILIA- AND FLAGELLA-ASSOCIATED PROTEIN 161"/>
    <property type="match status" value="1"/>
</dbReference>
<dbReference type="Pfam" id="PF24569">
    <property type="entry name" value="CFAP161"/>
    <property type="match status" value="1"/>
</dbReference>
<sequence>MAQNVYGPGVRIGNWNEDVYLEEELMKDFLEKRDKGKLLIQRSRRLKQNLLRPMQLSVTEDGYIHYGDKVMLVNPDDPDTEADVFLRGDLSLCMTPDEIQSHLKDELEVPCGLSAVQAKTPIGRNTFIILSVHRDATGQVLRYGQDFCLGITGGFDNKMLYLSSDHRTLLKSSKRSWLQEVYLTDEVSHVNCWQAAFPDPQLRLEYEGFPVPANAKILINHCHTNRGLAAHRHLFLSTYFGKEAEVVAHTYLDSHRVEKPRNHWMLVTGNPRDASSSMLDLPKPPTEDTRAMEQAMGLDTQ</sequence>
<reference key="1">
    <citation type="journal article" date="2004" name="Nat. Genet.">
        <title>Complete sequencing and characterization of 21,243 full-length human cDNAs.</title>
        <authorList>
            <person name="Ota T."/>
            <person name="Suzuki Y."/>
            <person name="Nishikawa T."/>
            <person name="Otsuki T."/>
            <person name="Sugiyama T."/>
            <person name="Irie R."/>
            <person name="Wakamatsu A."/>
            <person name="Hayashi K."/>
            <person name="Sato H."/>
            <person name="Nagai K."/>
            <person name="Kimura K."/>
            <person name="Makita H."/>
            <person name="Sekine M."/>
            <person name="Obayashi M."/>
            <person name="Nishi T."/>
            <person name="Shibahara T."/>
            <person name="Tanaka T."/>
            <person name="Ishii S."/>
            <person name="Yamamoto J."/>
            <person name="Saito K."/>
            <person name="Kawai Y."/>
            <person name="Isono Y."/>
            <person name="Nakamura Y."/>
            <person name="Nagahari K."/>
            <person name="Murakami K."/>
            <person name="Yasuda T."/>
            <person name="Iwayanagi T."/>
            <person name="Wagatsuma M."/>
            <person name="Shiratori A."/>
            <person name="Sudo H."/>
            <person name="Hosoiri T."/>
            <person name="Kaku Y."/>
            <person name="Kodaira H."/>
            <person name="Kondo H."/>
            <person name="Sugawara M."/>
            <person name="Takahashi M."/>
            <person name="Kanda K."/>
            <person name="Yokoi T."/>
            <person name="Furuya T."/>
            <person name="Kikkawa E."/>
            <person name="Omura Y."/>
            <person name="Abe K."/>
            <person name="Kamihara K."/>
            <person name="Katsuta N."/>
            <person name="Sato K."/>
            <person name="Tanikawa M."/>
            <person name="Yamazaki M."/>
            <person name="Ninomiya K."/>
            <person name="Ishibashi T."/>
            <person name="Yamashita H."/>
            <person name="Murakawa K."/>
            <person name="Fujimori K."/>
            <person name="Tanai H."/>
            <person name="Kimata M."/>
            <person name="Watanabe M."/>
            <person name="Hiraoka S."/>
            <person name="Chiba Y."/>
            <person name="Ishida S."/>
            <person name="Ono Y."/>
            <person name="Takiguchi S."/>
            <person name="Watanabe S."/>
            <person name="Yosida M."/>
            <person name="Hotuta T."/>
            <person name="Kusano J."/>
            <person name="Kanehori K."/>
            <person name="Takahashi-Fujii A."/>
            <person name="Hara H."/>
            <person name="Tanase T.-O."/>
            <person name="Nomura Y."/>
            <person name="Togiya S."/>
            <person name="Komai F."/>
            <person name="Hara R."/>
            <person name="Takeuchi K."/>
            <person name="Arita M."/>
            <person name="Imose N."/>
            <person name="Musashino K."/>
            <person name="Yuuki H."/>
            <person name="Oshima A."/>
            <person name="Sasaki N."/>
            <person name="Aotsuka S."/>
            <person name="Yoshikawa Y."/>
            <person name="Matsunawa H."/>
            <person name="Ichihara T."/>
            <person name="Shiohata N."/>
            <person name="Sano S."/>
            <person name="Moriya S."/>
            <person name="Momiyama H."/>
            <person name="Satoh N."/>
            <person name="Takami S."/>
            <person name="Terashima Y."/>
            <person name="Suzuki O."/>
            <person name="Nakagawa S."/>
            <person name="Senoh A."/>
            <person name="Mizoguchi H."/>
            <person name="Goto Y."/>
            <person name="Shimizu F."/>
            <person name="Wakebe H."/>
            <person name="Hishigaki H."/>
            <person name="Watanabe T."/>
            <person name="Sugiyama A."/>
            <person name="Takemoto M."/>
            <person name="Kawakami B."/>
            <person name="Yamazaki M."/>
            <person name="Watanabe K."/>
            <person name="Kumagai A."/>
            <person name="Itakura S."/>
            <person name="Fukuzumi Y."/>
            <person name="Fujimori Y."/>
            <person name="Komiyama M."/>
            <person name="Tashiro H."/>
            <person name="Tanigami A."/>
            <person name="Fujiwara T."/>
            <person name="Ono T."/>
            <person name="Yamada K."/>
            <person name="Fujii Y."/>
            <person name="Ozaki K."/>
            <person name="Hirao M."/>
            <person name="Ohmori Y."/>
            <person name="Kawabata A."/>
            <person name="Hikiji T."/>
            <person name="Kobatake N."/>
            <person name="Inagaki H."/>
            <person name="Ikema Y."/>
            <person name="Okamoto S."/>
            <person name="Okitani R."/>
            <person name="Kawakami T."/>
            <person name="Noguchi S."/>
            <person name="Itoh T."/>
            <person name="Shigeta K."/>
            <person name="Senba T."/>
            <person name="Matsumura K."/>
            <person name="Nakajima Y."/>
            <person name="Mizuno T."/>
            <person name="Morinaga M."/>
            <person name="Sasaki M."/>
            <person name="Togashi T."/>
            <person name="Oyama M."/>
            <person name="Hata H."/>
            <person name="Watanabe M."/>
            <person name="Komatsu T."/>
            <person name="Mizushima-Sugano J."/>
            <person name="Satoh T."/>
            <person name="Shirai Y."/>
            <person name="Takahashi Y."/>
            <person name="Nakagawa K."/>
            <person name="Okumura K."/>
            <person name="Nagase T."/>
            <person name="Nomura N."/>
            <person name="Kikuchi H."/>
            <person name="Masuho Y."/>
            <person name="Yamashita R."/>
            <person name="Nakai K."/>
            <person name="Yada T."/>
            <person name="Nakamura Y."/>
            <person name="Ohara O."/>
            <person name="Isogai T."/>
            <person name="Sugano S."/>
        </authorList>
    </citation>
    <scope>NUCLEOTIDE SEQUENCE [LARGE SCALE MRNA] (ISOFORM 2)</scope>
    <source>
        <tissue>Heart</tissue>
    </source>
</reference>
<reference key="2">
    <citation type="journal article" date="2004" name="Genome Res.">
        <title>The status, quality, and expansion of the NIH full-length cDNA project: the Mammalian Gene Collection (MGC).</title>
        <authorList>
            <consortium name="The MGC Project Team"/>
        </authorList>
    </citation>
    <scope>NUCLEOTIDE SEQUENCE [LARGE SCALE MRNA] (ISOFORM 1)</scope>
    <source>
        <tissue>Testis</tissue>
    </source>
</reference>
<reference evidence="6" key="3">
    <citation type="journal article" date="2022" name="Proc. Natl. Acad. Sci. U.S.A.">
        <title>SPACA9 is a lumenal protein of human ciliary singlet and doublet microtubules.</title>
        <authorList>
            <person name="Gui M."/>
            <person name="Croft J.T."/>
            <person name="Zabeo D."/>
            <person name="Acharya V."/>
            <person name="Kollman J.M."/>
            <person name="Burgoyne T."/>
            <person name="Hoog J.L."/>
            <person name="Brown A."/>
        </authorList>
    </citation>
    <scope>STRUCTURE BY ELECTRON MICROSCOPY (3.60 ANGSTROMS)</scope>
    <scope>FUNCTION</scope>
    <scope>SUBCELLULAR LOCATION</scope>
    <scope>TISSUE SPECIFICITY</scope>
</reference>